<keyword id="KW-0028">Amino-acid biosynthesis</keyword>
<keyword id="KW-0057">Aromatic amino acid biosynthesis</keyword>
<keyword id="KW-0170">Cobalt</keyword>
<keyword id="KW-0963">Cytoplasm</keyword>
<keyword id="KW-0456">Lyase</keyword>
<keyword id="KW-0479">Metal-binding</keyword>
<keyword id="KW-0520">NAD</keyword>
<keyword id="KW-0547">Nucleotide-binding</keyword>
<keyword id="KW-1185">Reference proteome</keyword>
<keyword id="KW-0862">Zinc</keyword>
<sequence>MIRTVPVGLGERAYDVVIGPGLLDQAGERVAAVLGKRKRVAVVTDAHVGAHHGERLSAALQGAGITVDLITIAPGEESKSFEGLADLSDRLLALNLERGDQIVALGGGVVGDLAGFAAAIYKRGIDFVQVPTTLLAQVDSSVGGKTAIDTPRGKNLIGAFHQPRLVLADLDVLATLPARELACGYAEIIKYGLLGDFAFFEWLETNVQAVLDRDVDALVRAVGRSVEMKAEIVAEDEKEAGRRALLNLGHTFGHAIEAEMGFGEALKHGEAVGVGMAQAFRFSARLGLCPSQDAVRAQAAIKAAGLPTTLADVRPEPFSADALIAHCGQDKKAQGGKLTFVLARGIGDAFVAKDVDRAALKAFLVEEGAV</sequence>
<reference key="1">
    <citation type="journal article" date="2010" name="J. Bacteriol.">
        <title>The genetic basis of laboratory adaptation in Caulobacter crescentus.</title>
        <authorList>
            <person name="Marks M.E."/>
            <person name="Castro-Rojas C.M."/>
            <person name="Teiling C."/>
            <person name="Du L."/>
            <person name="Kapatral V."/>
            <person name="Walunas T.L."/>
            <person name="Crosson S."/>
        </authorList>
    </citation>
    <scope>NUCLEOTIDE SEQUENCE [LARGE SCALE GENOMIC DNA]</scope>
    <source>
        <strain>NA1000 / CB15N</strain>
    </source>
</reference>
<protein>
    <recommendedName>
        <fullName evidence="1">3-dehydroquinate synthase</fullName>
        <shortName evidence="1">DHQS</shortName>
        <ecNumber evidence="1">4.2.3.4</ecNumber>
    </recommendedName>
</protein>
<proteinExistence type="inferred from homology"/>
<feature type="chain" id="PRO_1000119077" description="3-dehydroquinate synthase">
    <location>
        <begin position="1"/>
        <end position="370"/>
    </location>
</feature>
<feature type="binding site" evidence="1">
    <location>
        <begin position="108"/>
        <end position="112"/>
    </location>
    <ligand>
        <name>NAD(+)</name>
        <dbReference type="ChEBI" id="CHEBI:57540"/>
    </ligand>
</feature>
<feature type="binding site" evidence="1">
    <location>
        <begin position="132"/>
        <end position="133"/>
    </location>
    <ligand>
        <name>NAD(+)</name>
        <dbReference type="ChEBI" id="CHEBI:57540"/>
    </ligand>
</feature>
<feature type="binding site" evidence="1">
    <location>
        <position position="145"/>
    </location>
    <ligand>
        <name>NAD(+)</name>
        <dbReference type="ChEBI" id="CHEBI:57540"/>
    </ligand>
</feature>
<feature type="binding site" evidence="1">
    <location>
        <position position="154"/>
    </location>
    <ligand>
        <name>NAD(+)</name>
        <dbReference type="ChEBI" id="CHEBI:57540"/>
    </ligand>
</feature>
<feature type="binding site" evidence="1">
    <location>
        <position position="187"/>
    </location>
    <ligand>
        <name>Zn(2+)</name>
        <dbReference type="ChEBI" id="CHEBI:29105"/>
    </ligand>
</feature>
<feature type="binding site" evidence="1">
    <location>
        <position position="250"/>
    </location>
    <ligand>
        <name>Zn(2+)</name>
        <dbReference type="ChEBI" id="CHEBI:29105"/>
    </ligand>
</feature>
<feature type="binding site" evidence="1">
    <location>
        <position position="268"/>
    </location>
    <ligand>
        <name>Zn(2+)</name>
        <dbReference type="ChEBI" id="CHEBI:29105"/>
    </ligand>
</feature>
<name>AROB_CAUVN</name>
<dbReference type="EC" id="4.2.3.4" evidence="1"/>
<dbReference type="EMBL" id="CP001340">
    <property type="protein sequence ID" value="ACL96569.1"/>
    <property type="molecule type" value="Genomic_DNA"/>
</dbReference>
<dbReference type="RefSeq" id="WP_010920845.1">
    <property type="nucleotide sequence ID" value="NC_011916.1"/>
</dbReference>
<dbReference type="RefSeq" id="YP_002518477.1">
    <property type="nucleotide sequence ID" value="NC_011916.1"/>
</dbReference>
<dbReference type="SMR" id="B8H332"/>
<dbReference type="GeneID" id="7333558"/>
<dbReference type="KEGG" id="ccs:CCNA_03104"/>
<dbReference type="PATRIC" id="fig|565050.3.peg.3032"/>
<dbReference type="HOGENOM" id="CLU_001201_0_2_5"/>
<dbReference type="OrthoDB" id="9806583at2"/>
<dbReference type="PhylomeDB" id="B8H332"/>
<dbReference type="UniPathway" id="UPA00053">
    <property type="reaction ID" value="UER00085"/>
</dbReference>
<dbReference type="Proteomes" id="UP000001364">
    <property type="component" value="Chromosome"/>
</dbReference>
<dbReference type="GO" id="GO:0005737">
    <property type="term" value="C:cytoplasm"/>
    <property type="evidence" value="ECO:0007669"/>
    <property type="project" value="UniProtKB-SubCell"/>
</dbReference>
<dbReference type="GO" id="GO:0003856">
    <property type="term" value="F:3-dehydroquinate synthase activity"/>
    <property type="evidence" value="ECO:0007669"/>
    <property type="project" value="UniProtKB-UniRule"/>
</dbReference>
<dbReference type="GO" id="GO:0046872">
    <property type="term" value="F:metal ion binding"/>
    <property type="evidence" value="ECO:0007669"/>
    <property type="project" value="UniProtKB-KW"/>
</dbReference>
<dbReference type="GO" id="GO:0000166">
    <property type="term" value="F:nucleotide binding"/>
    <property type="evidence" value="ECO:0007669"/>
    <property type="project" value="UniProtKB-KW"/>
</dbReference>
<dbReference type="GO" id="GO:0008652">
    <property type="term" value="P:amino acid biosynthetic process"/>
    <property type="evidence" value="ECO:0007669"/>
    <property type="project" value="UniProtKB-KW"/>
</dbReference>
<dbReference type="GO" id="GO:0009073">
    <property type="term" value="P:aromatic amino acid family biosynthetic process"/>
    <property type="evidence" value="ECO:0007669"/>
    <property type="project" value="UniProtKB-KW"/>
</dbReference>
<dbReference type="GO" id="GO:0009423">
    <property type="term" value="P:chorismate biosynthetic process"/>
    <property type="evidence" value="ECO:0007669"/>
    <property type="project" value="UniProtKB-UniRule"/>
</dbReference>
<dbReference type="CDD" id="cd08195">
    <property type="entry name" value="DHQS"/>
    <property type="match status" value="1"/>
</dbReference>
<dbReference type="FunFam" id="3.40.50.1970:FF:000001">
    <property type="entry name" value="3-dehydroquinate synthase"/>
    <property type="match status" value="1"/>
</dbReference>
<dbReference type="Gene3D" id="3.40.50.1970">
    <property type="match status" value="1"/>
</dbReference>
<dbReference type="Gene3D" id="1.20.1090.10">
    <property type="entry name" value="Dehydroquinate synthase-like - alpha domain"/>
    <property type="match status" value="1"/>
</dbReference>
<dbReference type="HAMAP" id="MF_00110">
    <property type="entry name" value="DHQ_synthase"/>
    <property type="match status" value="1"/>
</dbReference>
<dbReference type="InterPro" id="IPR050071">
    <property type="entry name" value="Dehydroquinate_synthase"/>
</dbReference>
<dbReference type="InterPro" id="IPR016037">
    <property type="entry name" value="DHQ_synth_AroB"/>
</dbReference>
<dbReference type="InterPro" id="IPR030963">
    <property type="entry name" value="DHQ_synth_fam"/>
</dbReference>
<dbReference type="InterPro" id="IPR030960">
    <property type="entry name" value="DHQS/DOIS_N"/>
</dbReference>
<dbReference type="InterPro" id="IPR056179">
    <property type="entry name" value="DHQS_C"/>
</dbReference>
<dbReference type="NCBIfam" id="TIGR01357">
    <property type="entry name" value="aroB"/>
    <property type="match status" value="1"/>
</dbReference>
<dbReference type="PANTHER" id="PTHR43622">
    <property type="entry name" value="3-DEHYDROQUINATE SYNTHASE"/>
    <property type="match status" value="1"/>
</dbReference>
<dbReference type="PANTHER" id="PTHR43622:SF7">
    <property type="entry name" value="3-DEHYDROQUINATE SYNTHASE, CHLOROPLASTIC"/>
    <property type="match status" value="1"/>
</dbReference>
<dbReference type="Pfam" id="PF01761">
    <property type="entry name" value="DHQ_synthase"/>
    <property type="match status" value="1"/>
</dbReference>
<dbReference type="Pfam" id="PF24621">
    <property type="entry name" value="DHQS_C"/>
    <property type="match status" value="1"/>
</dbReference>
<dbReference type="PIRSF" id="PIRSF001455">
    <property type="entry name" value="DHQ_synth"/>
    <property type="match status" value="1"/>
</dbReference>
<dbReference type="SUPFAM" id="SSF56796">
    <property type="entry name" value="Dehydroquinate synthase-like"/>
    <property type="match status" value="1"/>
</dbReference>
<evidence type="ECO:0000255" key="1">
    <source>
        <dbReference type="HAMAP-Rule" id="MF_00110"/>
    </source>
</evidence>
<accession>B8H332</accession>
<gene>
    <name evidence="1" type="primary">aroB</name>
    <name type="ordered locus">CCNA_03104</name>
</gene>
<organism>
    <name type="scientific">Caulobacter vibrioides (strain NA1000 / CB15N)</name>
    <name type="common">Caulobacter crescentus</name>
    <dbReference type="NCBI Taxonomy" id="565050"/>
    <lineage>
        <taxon>Bacteria</taxon>
        <taxon>Pseudomonadati</taxon>
        <taxon>Pseudomonadota</taxon>
        <taxon>Alphaproteobacteria</taxon>
        <taxon>Caulobacterales</taxon>
        <taxon>Caulobacteraceae</taxon>
        <taxon>Caulobacter</taxon>
    </lineage>
</organism>
<comment type="function">
    <text evidence="1">Catalyzes the conversion of 3-deoxy-D-arabino-heptulosonate 7-phosphate (DAHP) to dehydroquinate (DHQ).</text>
</comment>
<comment type="catalytic activity">
    <reaction evidence="1">
        <text>7-phospho-2-dehydro-3-deoxy-D-arabino-heptonate = 3-dehydroquinate + phosphate</text>
        <dbReference type="Rhea" id="RHEA:21968"/>
        <dbReference type="ChEBI" id="CHEBI:32364"/>
        <dbReference type="ChEBI" id="CHEBI:43474"/>
        <dbReference type="ChEBI" id="CHEBI:58394"/>
        <dbReference type="EC" id="4.2.3.4"/>
    </reaction>
</comment>
<comment type="cofactor">
    <cofactor evidence="1">
        <name>Co(2+)</name>
        <dbReference type="ChEBI" id="CHEBI:48828"/>
    </cofactor>
    <cofactor evidence="1">
        <name>Zn(2+)</name>
        <dbReference type="ChEBI" id="CHEBI:29105"/>
    </cofactor>
    <text evidence="1">Binds 1 divalent metal cation per subunit. Can use either Co(2+) or Zn(2+).</text>
</comment>
<comment type="cofactor">
    <cofactor evidence="1">
        <name>NAD(+)</name>
        <dbReference type="ChEBI" id="CHEBI:57540"/>
    </cofactor>
</comment>
<comment type="pathway">
    <text evidence="1">Metabolic intermediate biosynthesis; chorismate biosynthesis; chorismate from D-erythrose 4-phosphate and phosphoenolpyruvate: step 2/7.</text>
</comment>
<comment type="subcellular location">
    <subcellularLocation>
        <location evidence="1">Cytoplasm</location>
    </subcellularLocation>
</comment>
<comment type="similarity">
    <text evidence="1">Belongs to the sugar phosphate cyclases superfamily. Dehydroquinate synthase family.</text>
</comment>